<protein>
    <recommendedName>
        <fullName evidence="2">Virion infectivity factor</fullName>
        <shortName evidence="2">Vif</shortName>
    </recommendedName>
    <alternativeName>
        <fullName evidence="2">SOR protein</fullName>
    </alternativeName>
    <component>
        <recommendedName>
            <fullName evidence="2">p17</fullName>
        </recommendedName>
    </component>
    <component>
        <recommendedName>
            <fullName evidence="2">p7</fullName>
        </recommendedName>
    </component>
</protein>
<keyword id="KW-0014">AIDS</keyword>
<keyword id="KW-1032">Host cell membrane</keyword>
<keyword id="KW-1035">Host cytoplasm</keyword>
<keyword id="KW-1043">Host membrane</keyword>
<keyword id="KW-0945">Host-virus interaction</keyword>
<keyword id="KW-0472">Membrane</keyword>
<keyword id="KW-0479">Metal-binding</keyword>
<keyword id="KW-0597">Phosphoprotein</keyword>
<keyword id="KW-1185">Reference proteome</keyword>
<keyword id="KW-0694">RNA-binding</keyword>
<keyword id="KW-0832">Ubl conjugation</keyword>
<keyword id="KW-0833">Ubl conjugation pathway</keyword>
<keyword id="KW-0946">Virion</keyword>
<keyword id="KW-0862">Zinc</keyword>
<sequence length="192" mass="22687">MENRWQVMIVWQVDRMRIRTWKSLVKHHMYISRKAKGWFYRHHYESTHPRISSEVHIPPGDERLVITTYWGLHTGERDWHLGQGVSIEWRKRRYSTQVDPDLADQLIHLYYFDCFSESAIRKPSLGHIVSPRCEYQAGHNKVGSLQYLALAALTTPKKIKPPLPSVKKLTEDRWNKPQKTKGHRGSHTMNGH</sequence>
<organism>
    <name type="scientific">Human immunodeficiency virus type 1 group M subtype B (isolate RF/HAT3)</name>
    <name type="common">HIV-1</name>
    <dbReference type="NCBI Taxonomy" id="11701"/>
    <lineage>
        <taxon>Viruses</taxon>
        <taxon>Riboviria</taxon>
        <taxon>Pararnavirae</taxon>
        <taxon>Artverviricota</taxon>
        <taxon>Revtraviricetes</taxon>
        <taxon>Ortervirales</taxon>
        <taxon>Retroviridae</taxon>
        <taxon>Orthoretrovirinae</taxon>
        <taxon>Lentivirus</taxon>
        <taxon>Human immunodeficiency virus type 1</taxon>
    </lineage>
</organism>
<gene>
    <name evidence="2" type="primary">vif</name>
</gene>
<name>VIF_HV1RH</name>
<feature type="chain" id="PRO_0000043062" description="Virion infectivity factor" evidence="2">
    <location>
        <begin position="1"/>
        <end position="192"/>
    </location>
</feature>
<feature type="chain" id="PRO_0000043063" description="p17" evidence="2">
    <location>
        <begin position="1"/>
        <end position="150"/>
    </location>
</feature>
<feature type="chain" id="PRO_0000043064" description="p7" evidence="2">
    <location>
        <begin position="151"/>
        <end position="192"/>
    </location>
</feature>
<feature type="region of interest" description="Interaction with host APOBEC3F; F1-box" evidence="2">
    <location>
        <begin position="14"/>
        <end position="17"/>
    </location>
</feature>
<feature type="region of interest" description="Interaction with host APOBEC3G; G-box" evidence="2">
    <location>
        <begin position="40"/>
        <end position="44"/>
    </location>
</feature>
<feature type="region of interest" description="Interaction with host APOBEC3F and APOBEC3G; FG-box" evidence="2">
    <location>
        <begin position="54"/>
        <end position="72"/>
    </location>
</feature>
<feature type="region of interest" description="Interaction with host APOBEC3F; F2-box" evidence="2">
    <location>
        <begin position="74"/>
        <end position="79"/>
    </location>
</feature>
<feature type="region of interest" description="RNA-binding" evidence="2">
    <location>
        <begin position="75"/>
        <end position="114"/>
    </location>
</feature>
<feature type="region of interest" description="SOCS box-like" evidence="2">
    <location>
        <begin position="151"/>
        <end position="180"/>
    </location>
</feature>
<feature type="region of interest" description="Multimerization" evidence="2">
    <location>
        <begin position="151"/>
        <end position="164"/>
    </location>
</feature>
<feature type="region of interest" description="Disordered" evidence="3">
    <location>
        <begin position="161"/>
        <end position="192"/>
    </location>
</feature>
<feature type="region of interest" description="Membrane association" evidence="2">
    <location>
        <begin position="171"/>
        <end position="172"/>
    </location>
</feature>
<feature type="short sequence motif" description="HCCH motif" evidence="2">
    <location>
        <begin position="108"/>
        <end position="139"/>
    </location>
</feature>
<feature type="short sequence motif" description="BC-box-like motif" evidence="2">
    <location>
        <begin position="144"/>
        <end position="153"/>
    </location>
</feature>
<feature type="compositionally biased region" description="Basic residues" evidence="3">
    <location>
        <begin position="176"/>
        <end position="186"/>
    </location>
</feature>
<feature type="binding site" evidence="2">
    <location>
        <position position="108"/>
    </location>
    <ligand>
        <name>Zn(2+)</name>
        <dbReference type="ChEBI" id="CHEBI:29105"/>
    </ligand>
</feature>
<feature type="binding site" evidence="2">
    <location>
        <position position="114"/>
    </location>
    <ligand>
        <name>Zn(2+)</name>
        <dbReference type="ChEBI" id="CHEBI:29105"/>
    </ligand>
</feature>
<feature type="binding site" evidence="2">
    <location>
        <position position="133"/>
    </location>
    <ligand>
        <name>Zn(2+)</name>
        <dbReference type="ChEBI" id="CHEBI:29105"/>
    </ligand>
</feature>
<feature type="binding site" evidence="2">
    <location>
        <position position="139"/>
    </location>
    <ligand>
        <name>Zn(2+)</name>
        <dbReference type="ChEBI" id="CHEBI:29105"/>
    </ligand>
</feature>
<feature type="site" description="Cleavage in virion (by viral protease)" evidence="2">
    <location>
        <begin position="150"/>
        <end position="151"/>
    </location>
</feature>
<feature type="modified residue" description="Phosphothreonine; by host MAP4K1" evidence="2">
    <location>
        <position position="96"/>
    </location>
</feature>
<feature type="modified residue" description="Phosphoserine; by host" evidence="2">
    <location>
        <position position="144"/>
    </location>
</feature>
<feature type="modified residue" description="Phosphothreonine; by host" evidence="2">
    <location>
        <position position="155"/>
    </location>
</feature>
<feature type="modified residue" description="Phosphoserine; by host MAP4K1" evidence="2">
    <location>
        <position position="165"/>
    </location>
</feature>
<feature type="modified residue" description="Phosphothreonine; by host" evidence="2">
    <location>
        <position position="188"/>
    </location>
</feature>
<comment type="function">
    <text evidence="2">Counteracts the innate antiviral activity of host APOBEC3F and APOBEC3G by promoting their ubiquitination and degradation. Acts as a substrate recognition component of an E3 ubiquitin-protein ligase complex: mechanistically, Vif hijacks a host cullin-5-RING E3 ubiquitin-protein ligase complex (ECS complex) and the transcription coactivator CBFB/CBF-beta to form an active E3 ubiquitin-protein ligase complex that targets APOBEC3G and APOBEC3F for polyubiquitination, leading to their degradation by the proteasome. Vif interaction with APOBEC3G also blocks its cytidine deaminase activity in a proteasome-independent manner, suggesting a dual inhibitory mechanism. May interact directly with APOBEC3G mRNA in order to inhibit its translation. Association with CBFB/CBF-beta also inhibits the transcription coactivator activity of CBFB/CBF-beta. Seems to play a role in viral morphology by affecting the stability of the viral nucleoprotein core. Finally, Vif also contributes to the G2 cell cycle arrest observed in HIV infected cells.</text>
</comment>
<comment type="subunit">
    <text evidence="1">Homomultimer; in vitro and presumably in vivo. Interacts with viral RNA and Pr55Gag precursor; these interactions mediate Vif incorporation into the virion. Interacts with the viral reverse transcriptase. Forms cullin-5-RING E3 ubiquitin-protein ligase complex (ECS complex) by interacting with host CUL5, RBX2, elongin BC complex (ELOB and ELOC) and CBFB/CBF-beta. Within the ECS complex, Vif interacts directly with host CUL5, ELOC and APOBEC (APOBEC3F and APOBEC3G) substrates. The ECS complex also contains some single-stranded RNA (ssRNA) that acts as a glue that bridges Vif with APOBEC (APOBEC3F and APOBEC3G) substrates. Interacts with host UBCE7IP1 isoform 3/ZIN and possibly with SAT. Interacts with host tyrosine kinases HCK and FYN; these interactions may decrease level of phosphorylated APOBEC3G incorporation into virions. Interacts with host ABCE1; this interaction may play a role in protecting viral RNA from damage during viral assembly. Interacts with host MDM2; this interaction targets Vif for degradation by the proteasome.</text>
</comment>
<comment type="subcellular location">
    <subcellularLocation>
        <location evidence="2">Host cytoplasm</location>
    </subcellularLocation>
    <subcellularLocation>
        <location evidence="2">Host cell membrane</location>
        <topology evidence="2">Peripheral membrane protein</topology>
        <orientation evidence="2">Cytoplasmic side</orientation>
    </subcellularLocation>
    <subcellularLocation>
        <location evidence="2">Virion</location>
    </subcellularLocation>
    <text evidence="2">In the cytoplasm, seems to colocalize with intermediate filament vimentin. A fraction is associated with the cytoplasmic side of cellular membranes, presumably via the interaction with Pr55Gag precursor. Incorporated in virions at a ratio of approximately 7 to 20 molecules per virion.</text>
</comment>
<comment type="induction">
    <text evidence="2">Expressed late during infection in a Rev-dependent manner.</text>
</comment>
<comment type="domain">
    <text evidence="2">The BC-like-box motif mediates the interaction with elongin BC complex.</text>
</comment>
<comment type="domain">
    <text evidence="2">The HCCH motif (H-x(5)-C-x(18)-C-x(5)-H) mediates the interaction with CUL5.</text>
</comment>
<comment type="PTM">
    <text evidence="2">Processed in virion by the viral protease.</text>
</comment>
<comment type="PTM">
    <text evidence="2">Highly phosphorylated on serine and threonine residues.</text>
</comment>
<comment type="PTM">
    <text evidence="2">Polyubiquitinated and degraded by the proteasome in the presence of APOBEC3G.</text>
</comment>
<comment type="miscellaneous">
    <text evidence="2">Vif-defective viruses show catastrophic failure in reverse transcription due to APOBEC-induced mutations that initiate a DNA base repair pathway and compromise the structural integrity of the ssDNA. In the absence of Vif, the virion is morphologically abnormal.</text>
</comment>
<comment type="miscellaneous">
    <text evidence="2">HIV-1 lineages are divided in three main groups, M (for Major), O (for Outlier), and N (for New, or Non-M, Non-O). The vast majority of strains found worldwide belong to the group M. Group O seems to be endemic to and largely confined to Cameroon and neighboring countries in West Central Africa, where these viruses represent a small minority of HIV-1 strains. The group N is represented by a limited number of isolates from Cameroonian persons. The group M is further subdivided in 9 clades or subtypes (A to D, F to H, J and K).</text>
</comment>
<comment type="miscellaneous">
    <text evidence="2">Required for replication in 'nonpermissive' cells, including primary T-cells, macrophages and certain T-cell lines, but is dispensable for replication in 'permissive' cell lines, such as 293T cells. In nonpermissive cells, Vif-defective viruses can produce virions, but they fail to complete reverse transcription and cannot successfully infect new cells.</text>
</comment>
<comment type="similarity">
    <text evidence="2">Belongs to the primate lentivirus group Vif protein family.</text>
</comment>
<accession>P05900</accession>
<organismHost>
    <name type="scientific">Homo sapiens</name>
    <name type="common">Human</name>
    <dbReference type="NCBI Taxonomy" id="9606"/>
</organismHost>
<reference key="1">
    <citation type="journal article" date="1986" name="Cell">
        <title>Identification and characterization of conserved and variable regions in the envelope gene of HTLV-III/LAV, the retrovirus of AIDS.</title>
        <authorList>
            <person name="Starcich B.R."/>
            <person name="Hahn B.H."/>
            <person name="Shaw G.M."/>
            <person name="McNeely P.D."/>
            <person name="Modrow S."/>
            <person name="Wolf H."/>
            <person name="Parks E.S."/>
            <person name="Parks W.P."/>
            <person name="Josephs S.F."/>
            <person name="Gallo R.C."/>
            <person name="Wong-Staal F."/>
        </authorList>
    </citation>
    <scope>NUCLEOTIDE SEQUENCE [GENOMIC RNA]</scope>
</reference>
<reference key="2">
    <citation type="journal article" date="2004" name="Trends Mol. Med.">
        <title>The viral infectivity factor (Vif) of HIV-1 unveiled.</title>
        <authorList>
            <person name="Rose K.M."/>
            <person name="Marin M."/>
            <person name="Kozak S.L."/>
            <person name="Kabat D."/>
        </authorList>
    </citation>
    <scope>REVIEW</scope>
</reference>
<evidence type="ECO:0000250" key="1">
    <source>
        <dbReference type="UniProtKB" id="O70897"/>
    </source>
</evidence>
<evidence type="ECO:0000255" key="2">
    <source>
        <dbReference type="HAMAP-Rule" id="MF_04081"/>
    </source>
</evidence>
<evidence type="ECO:0000256" key="3">
    <source>
        <dbReference type="SAM" id="MobiDB-lite"/>
    </source>
</evidence>
<dbReference type="EMBL" id="M17451">
    <property type="protein sequence ID" value="AAA45054.1"/>
    <property type="molecule type" value="Genomic_RNA"/>
</dbReference>
<dbReference type="SMR" id="P05900"/>
<dbReference type="Proteomes" id="UP000007699">
    <property type="component" value="Segment"/>
</dbReference>
<dbReference type="GO" id="GO:0030430">
    <property type="term" value="C:host cell cytoplasm"/>
    <property type="evidence" value="ECO:0007669"/>
    <property type="project" value="UniProtKB-SubCell"/>
</dbReference>
<dbReference type="GO" id="GO:0020002">
    <property type="term" value="C:host cell plasma membrane"/>
    <property type="evidence" value="ECO:0007669"/>
    <property type="project" value="UniProtKB-SubCell"/>
</dbReference>
<dbReference type="GO" id="GO:0016020">
    <property type="term" value="C:membrane"/>
    <property type="evidence" value="ECO:0007669"/>
    <property type="project" value="UniProtKB-UniRule"/>
</dbReference>
<dbReference type="GO" id="GO:0044423">
    <property type="term" value="C:virion component"/>
    <property type="evidence" value="ECO:0007669"/>
    <property type="project" value="UniProtKB-UniRule"/>
</dbReference>
<dbReference type="GO" id="GO:0046872">
    <property type="term" value="F:metal ion binding"/>
    <property type="evidence" value="ECO:0007669"/>
    <property type="project" value="UniProtKB-KW"/>
</dbReference>
<dbReference type="GO" id="GO:0003723">
    <property type="term" value="F:RNA binding"/>
    <property type="evidence" value="ECO:0007669"/>
    <property type="project" value="UniProtKB-UniRule"/>
</dbReference>
<dbReference type="GO" id="GO:0019058">
    <property type="term" value="P:viral life cycle"/>
    <property type="evidence" value="ECO:0007669"/>
    <property type="project" value="InterPro"/>
</dbReference>
<dbReference type="HAMAP" id="MF_04081">
    <property type="entry name" value="HIV_VIF"/>
    <property type="match status" value="1"/>
</dbReference>
<dbReference type="InterPro" id="IPR000475">
    <property type="entry name" value="Vif"/>
</dbReference>
<dbReference type="Pfam" id="PF00559">
    <property type="entry name" value="Vif"/>
    <property type="match status" value="1"/>
</dbReference>
<dbReference type="PRINTS" id="PR00349">
    <property type="entry name" value="VIRIONINFFCT"/>
</dbReference>
<proteinExistence type="inferred from homology"/>